<reference key="1">
    <citation type="journal article" date="2005" name="Nucleic Acids Res.">
        <title>Genome dynamics and diversity of Shigella species, the etiologic agents of bacillary dysentery.</title>
        <authorList>
            <person name="Yang F."/>
            <person name="Yang J."/>
            <person name="Zhang X."/>
            <person name="Chen L."/>
            <person name="Jiang Y."/>
            <person name="Yan Y."/>
            <person name="Tang X."/>
            <person name="Wang J."/>
            <person name="Xiong Z."/>
            <person name="Dong J."/>
            <person name="Xue Y."/>
            <person name="Zhu Y."/>
            <person name="Xu X."/>
            <person name="Sun L."/>
            <person name="Chen S."/>
            <person name="Nie H."/>
            <person name="Peng J."/>
            <person name="Xu J."/>
            <person name="Wang Y."/>
            <person name="Yuan Z."/>
            <person name="Wen Y."/>
            <person name="Yao Z."/>
            <person name="Shen Y."/>
            <person name="Qiang B."/>
            <person name="Hou Y."/>
            <person name="Yu J."/>
            <person name="Jin Q."/>
        </authorList>
    </citation>
    <scope>NUCLEOTIDE SEQUENCE [LARGE SCALE GENOMIC DNA]</scope>
    <source>
        <strain>Sb227</strain>
    </source>
</reference>
<gene>
    <name evidence="1" type="primary">ulaG</name>
    <name type="ordered locus">SBO_4263</name>
</gene>
<evidence type="ECO:0000255" key="1">
    <source>
        <dbReference type="HAMAP-Rule" id="MF_01266"/>
    </source>
</evidence>
<evidence type="ECO:0000305" key="2"/>
<feature type="chain" id="PRO_0000231489" description="Probable L-ascorbate-6-phosphate lactonase UlaG">
    <location>
        <begin position="1"/>
        <end position="354"/>
    </location>
</feature>
<keyword id="KW-0963">Cytoplasm</keyword>
<keyword id="KW-0378">Hydrolase</keyword>
<name>ULAG_SHIBS</name>
<sequence length="354" mass="40028">MSKVKSITRESWILSTFPEWGSWLNEEIEQEQVAPGTFAMWWLGCTGIWLKSEGGTNVCVDFWCGTGKQSHGNPLMKQGHQMQRMAGVKKLQPNLRTPPFVLDPFAIRQIDAVLATHDHNDHIDVNVAAAVMQNCADDVPFIGPKTCVDLWIGWGVPKERCIVVKPGDVVKVKDIEIHALDAFDRTALITLPADQKAAGVLPDGMDDRAVNYLFKTPGGSLYHSGDSHYSNYYAKHGNEHQIDVALGSYGENPRGITDKMTSADMLRMGEALNAKVVIPFHHDIWSNFQAAPQEIRVQWEMKKDRLKYGFKPFIWQVGGKFTWPLDKDNFEYHYPRGFDDCFTIEPDLPFKSFL</sequence>
<comment type="function">
    <text evidence="1">Probably catalyzes the hydrolysis of L-ascorbate-6-P into 3-keto-L-gulonate-6-P. Is essential for L-ascorbate utilization under anaerobic conditions.</text>
</comment>
<comment type="catalytic activity">
    <reaction evidence="1">
        <text>L-ascorbate 6-phosphate + H2O = 3-dehydro-L-gulonate 6-phosphate</text>
        <dbReference type="Rhea" id="RHEA:28803"/>
        <dbReference type="ChEBI" id="CHEBI:15377"/>
        <dbReference type="ChEBI" id="CHEBI:58774"/>
        <dbReference type="ChEBI" id="CHEBI:61698"/>
    </reaction>
</comment>
<comment type="cofactor">
    <cofactor evidence="1">
        <name>a divalent metal cation</name>
        <dbReference type="ChEBI" id="CHEBI:60240"/>
    </cofactor>
</comment>
<comment type="pathway">
    <text evidence="1">Cofactor degradation; L-ascorbate degradation; D-xylulose 5-phosphate from L-ascorbate: step 1/4.</text>
</comment>
<comment type="subcellular location">
    <subcellularLocation>
        <location evidence="1">Cytoplasm</location>
    </subcellularLocation>
</comment>
<comment type="induction">
    <text evidence="1">Induced by L-ascorbate. Repressed by UlaR.</text>
</comment>
<comment type="similarity">
    <text evidence="1">Belongs to the UlaG family.</text>
</comment>
<comment type="sequence caution" evidence="2">
    <conflict type="erroneous initiation">
        <sequence resource="EMBL-CDS" id="ABB68685"/>
    </conflict>
</comment>
<dbReference type="EC" id="3.1.1.-" evidence="1"/>
<dbReference type="EMBL" id="CP000036">
    <property type="protein sequence ID" value="ABB68685.1"/>
    <property type="status" value="ALT_INIT"/>
    <property type="molecule type" value="Genomic_DNA"/>
</dbReference>
<dbReference type="RefSeq" id="WP_004988497.1">
    <property type="nucleotide sequence ID" value="NC_007613.1"/>
</dbReference>
<dbReference type="SMR" id="Q31TC3"/>
<dbReference type="KEGG" id="sbo:SBO_4263"/>
<dbReference type="HOGENOM" id="CLU_074775_0_0_6"/>
<dbReference type="UniPathway" id="UPA00263">
    <property type="reaction ID" value="UER00377"/>
</dbReference>
<dbReference type="Proteomes" id="UP000007067">
    <property type="component" value="Chromosome"/>
</dbReference>
<dbReference type="GO" id="GO:0005737">
    <property type="term" value="C:cytoplasm"/>
    <property type="evidence" value="ECO:0007669"/>
    <property type="project" value="UniProtKB-SubCell"/>
</dbReference>
<dbReference type="GO" id="GO:0035460">
    <property type="term" value="F:L-ascorbate 6-phosphate lactonase activity"/>
    <property type="evidence" value="ECO:0007669"/>
    <property type="project" value="InterPro"/>
</dbReference>
<dbReference type="GO" id="GO:0030145">
    <property type="term" value="F:manganese ion binding"/>
    <property type="evidence" value="ECO:0007669"/>
    <property type="project" value="InterPro"/>
</dbReference>
<dbReference type="GO" id="GO:0019854">
    <property type="term" value="P:L-ascorbic acid catabolic process"/>
    <property type="evidence" value="ECO:0007669"/>
    <property type="project" value="UniProtKB-UniRule"/>
</dbReference>
<dbReference type="CDD" id="cd16284">
    <property type="entry name" value="UlaG-like_MBL-fold"/>
    <property type="match status" value="1"/>
</dbReference>
<dbReference type="FunFam" id="3.60.15.10:FF:000004">
    <property type="entry name" value="Probable L-ascorbate-6-phosphate lactonase UlaG"/>
    <property type="match status" value="1"/>
</dbReference>
<dbReference type="Gene3D" id="3.60.15.10">
    <property type="entry name" value="Ribonuclease Z/Hydroxyacylglutathione hydrolase-like"/>
    <property type="match status" value="1"/>
</dbReference>
<dbReference type="HAMAP" id="MF_01266">
    <property type="entry name" value="UlaG"/>
    <property type="match status" value="1"/>
</dbReference>
<dbReference type="InterPro" id="IPR023951">
    <property type="entry name" value="L-ascorbate_6P_UlaG"/>
</dbReference>
<dbReference type="InterPro" id="IPR001279">
    <property type="entry name" value="Metallo-B-lactamas"/>
</dbReference>
<dbReference type="InterPro" id="IPR036866">
    <property type="entry name" value="RibonucZ/Hydroxyglut_hydro"/>
</dbReference>
<dbReference type="InterPro" id="IPR048021">
    <property type="entry name" value="UlaG-like_MBL-fold"/>
</dbReference>
<dbReference type="InterPro" id="IPR050114">
    <property type="entry name" value="UPF0173_UPF0282_UlaG_hydrolase"/>
</dbReference>
<dbReference type="NCBIfam" id="NF008688">
    <property type="entry name" value="PRK11709.1"/>
    <property type="match status" value="1"/>
</dbReference>
<dbReference type="PANTHER" id="PTHR43546:SF9">
    <property type="entry name" value="L-ASCORBATE-6-PHOSPHATE LACTONASE ULAG-RELATED"/>
    <property type="match status" value="1"/>
</dbReference>
<dbReference type="PANTHER" id="PTHR43546">
    <property type="entry name" value="UPF0173 METAL-DEPENDENT HYDROLASE MJ1163-RELATED"/>
    <property type="match status" value="1"/>
</dbReference>
<dbReference type="Pfam" id="PF12706">
    <property type="entry name" value="Lactamase_B_2"/>
    <property type="match status" value="1"/>
</dbReference>
<dbReference type="SUPFAM" id="SSF56281">
    <property type="entry name" value="Metallo-hydrolase/oxidoreductase"/>
    <property type="match status" value="1"/>
</dbReference>
<protein>
    <recommendedName>
        <fullName evidence="1">Probable L-ascorbate-6-phosphate lactonase UlaG</fullName>
        <ecNumber evidence="1">3.1.1.-</ecNumber>
    </recommendedName>
    <alternativeName>
        <fullName evidence="1">L-ascorbate utilization protein G</fullName>
    </alternativeName>
</protein>
<proteinExistence type="inferred from homology"/>
<organism>
    <name type="scientific">Shigella boydii serotype 4 (strain Sb227)</name>
    <dbReference type="NCBI Taxonomy" id="300268"/>
    <lineage>
        <taxon>Bacteria</taxon>
        <taxon>Pseudomonadati</taxon>
        <taxon>Pseudomonadota</taxon>
        <taxon>Gammaproteobacteria</taxon>
        <taxon>Enterobacterales</taxon>
        <taxon>Enterobacteriaceae</taxon>
        <taxon>Shigella</taxon>
    </lineage>
</organism>
<accession>Q31TC3</accession>